<reference key="1">
    <citation type="journal article" date="1998" name="Nature">
        <title>The genome sequence of Rickettsia prowazekii and the origin of mitochondria.</title>
        <authorList>
            <person name="Andersson S.G.E."/>
            <person name="Zomorodipour A."/>
            <person name="Andersson J.O."/>
            <person name="Sicheritz-Ponten T."/>
            <person name="Alsmark U.C.M."/>
            <person name="Podowski R.M."/>
            <person name="Naeslund A.K."/>
            <person name="Eriksson A.-S."/>
            <person name="Winkler H.H."/>
            <person name="Kurland C.G."/>
        </authorList>
    </citation>
    <scope>NUCLEOTIDE SEQUENCE [LARGE SCALE GENOMIC DNA]</scope>
    <source>
        <strain>Madrid E</strain>
    </source>
</reference>
<name>RL17_RICPR</name>
<feature type="chain" id="PRO_0000175541" description="Large ribosomal subunit protein bL17">
    <location>
        <begin position="1"/>
        <end position="136"/>
    </location>
</feature>
<accession>Q9ZCT0</accession>
<keyword id="KW-1185">Reference proteome</keyword>
<keyword id="KW-0687">Ribonucleoprotein</keyword>
<keyword id="KW-0689">Ribosomal protein</keyword>
<protein>
    <recommendedName>
        <fullName evidence="1">Large ribosomal subunit protein bL17</fullName>
    </recommendedName>
    <alternativeName>
        <fullName evidence="2">50S ribosomal protein L17</fullName>
    </alternativeName>
</protein>
<comment type="subunit">
    <text evidence="1">Part of the 50S ribosomal subunit. Contacts protein L32.</text>
</comment>
<comment type="similarity">
    <text evidence="1">Belongs to the bacterial ribosomal protein bL17 family.</text>
</comment>
<gene>
    <name evidence="1" type="primary">rplQ</name>
    <name type="ordered locus">RP634</name>
</gene>
<dbReference type="EMBL" id="AJ235272">
    <property type="protein sequence ID" value="CAA15074.1"/>
    <property type="molecule type" value="Genomic_DNA"/>
</dbReference>
<dbReference type="PIR" id="H71668">
    <property type="entry name" value="H71668"/>
</dbReference>
<dbReference type="RefSeq" id="NP_220998.1">
    <property type="nucleotide sequence ID" value="NC_000963.1"/>
</dbReference>
<dbReference type="RefSeq" id="WP_004596246.1">
    <property type="nucleotide sequence ID" value="NC_000963.1"/>
</dbReference>
<dbReference type="SMR" id="Q9ZCT0"/>
<dbReference type="STRING" id="272947.gene:17555711"/>
<dbReference type="EnsemblBacteria" id="CAA15074">
    <property type="protein sequence ID" value="CAA15074"/>
    <property type="gene ID" value="CAA15074"/>
</dbReference>
<dbReference type="GeneID" id="57569759"/>
<dbReference type="KEGG" id="rpr:RP634"/>
<dbReference type="PATRIC" id="fig|272947.5.peg.656"/>
<dbReference type="eggNOG" id="COG0203">
    <property type="taxonomic scope" value="Bacteria"/>
</dbReference>
<dbReference type="HOGENOM" id="CLU_074407_2_0_5"/>
<dbReference type="OrthoDB" id="9809073at2"/>
<dbReference type="Proteomes" id="UP000002480">
    <property type="component" value="Chromosome"/>
</dbReference>
<dbReference type="GO" id="GO:0022625">
    <property type="term" value="C:cytosolic large ribosomal subunit"/>
    <property type="evidence" value="ECO:0007669"/>
    <property type="project" value="TreeGrafter"/>
</dbReference>
<dbReference type="GO" id="GO:0003735">
    <property type="term" value="F:structural constituent of ribosome"/>
    <property type="evidence" value="ECO:0007669"/>
    <property type="project" value="InterPro"/>
</dbReference>
<dbReference type="GO" id="GO:0006412">
    <property type="term" value="P:translation"/>
    <property type="evidence" value="ECO:0007669"/>
    <property type="project" value="UniProtKB-UniRule"/>
</dbReference>
<dbReference type="FunFam" id="3.90.1030.10:FF:000001">
    <property type="entry name" value="50S ribosomal protein L17"/>
    <property type="match status" value="1"/>
</dbReference>
<dbReference type="Gene3D" id="3.90.1030.10">
    <property type="entry name" value="Ribosomal protein L17"/>
    <property type="match status" value="1"/>
</dbReference>
<dbReference type="HAMAP" id="MF_01368">
    <property type="entry name" value="Ribosomal_bL17"/>
    <property type="match status" value="1"/>
</dbReference>
<dbReference type="InterPro" id="IPR000456">
    <property type="entry name" value="Ribosomal_bL17"/>
</dbReference>
<dbReference type="InterPro" id="IPR047859">
    <property type="entry name" value="Ribosomal_bL17_CS"/>
</dbReference>
<dbReference type="InterPro" id="IPR036373">
    <property type="entry name" value="Ribosomal_bL17_sf"/>
</dbReference>
<dbReference type="NCBIfam" id="TIGR00059">
    <property type="entry name" value="L17"/>
    <property type="match status" value="1"/>
</dbReference>
<dbReference type="PANTHER" id="PTHR14413:SF16">
    <property type="entry name" value="LARGE RIBOSOMAL SUBUNIT PROTEIN BL17M"/>
    <property type="match status" value="1"/>
</dbReference>
<dbReference type="PANTHER" id="PTHR14413">
    <property type="entry name" value="RIBOSOMAL PROTEIN L17"/>
    <property type="match status" value="1"/>
</dbReference>
<dbReference type="Pfam" id="PF01196">
    <property type="entry name" value="Ribosomal_L17"/>
    <property type="match status" value="1"/>
</dbReference>
<dbReference type="SUPFAM" id="SSF64263">
    <property type="entry name" value="Prokaryotic ribosomal protein L17"/>
    <property type="match status" value="1"/>
</dbReference>
<dbReference type="PROSITE" id="PS01167">
    <property type="entry name" value="RIBOSOMAL_L17"/>
    <property type="match status" value="1"/>
</dbReference>
<proteinExistence type="inferred from homology"/>
<evidence type="ECO:0000255" key="1">
    <source>
        <dbReference type="HAMAP-Rule" id="MF_01368"/>
    </source>
</evidence>
<evidence type="ECO:0000305" key="2"/>
<organism>
    <name type="scientific">Rickettsia prowazekii (strain Madrid E)</name>
    <dbReference type="NCBI Taxonomy" id="272947"/>
    <lineage>
        <taxon>Bacteria</taxon>
        <taxon>Pseudomonadati</taxon>
        <taxon>Pseudomonadota</taxon>
        <taxon>Alphaproteobacteria</taxon>
        <taxon>Rickettsiales</taxon>
        <taxon>Rickettsiaceae</taxon>
        <taxon>Rickettsieae</taxon>
        <taxon>Rickettsia</taxon>
        <taxon>typhus group</taxon>
    </lineage>
</organism>
<sequence length="136" mass="15561">MRHRIKGRRLNVTSSHRQSMLANMAVSLVIHEQIKTTLPKAKELRPYIEALITKAKKPDLAVRRSVLSKIKDKRAVEKIINILGVRYKDRPGGYTRIVKSGFRYGDLAPIAYIEFVDRDINAKGNVHQDANEEIKN</sequence>